<accession>Q1DC97</accession>
<gene>
    <name evidence="1" type="primary">rplU</name>
    <name type="ordered locus">MXAN_1469</name>
</gene>
<comment type="function">
    <text evidence="1">This protein binds to 23S rRNA in the presence of protein L20.</text>
</comment>
<comment type="subunit">
    <text evidence="1">Part of the 50S ribosomal subunit. Contacts protein L20.</text>
</comment>
<comment type="similarity">
    <text evidence="1">Belongs to the bacterial ribosomal protein bL21 family.</text>
</comment>
<comment type="sequence caution" evidence="2">
    <conflict type="erroneous initiation">
        <sequence resource="EMBL-CDS" id="ABF86284"/>
    </conflict>
</comment>
<reference key="1">
    <citation type="journal article" date="2006" name="Proc. Natl. Acad. Sci. U.S.A.">
        <title>Evolution of sensory complexity recorded in a myxobacterial genome.</title>
        <authorList>
            <person name="Goldman B.S."/>
            <person name="Nierman W.C."/>
            <person name="Kaiser D."/>
            <person name="Slater S.C."/>
            <person name="Durkin A.S."/>
            <person name="Eisen J.A."/>
            <person name="Ronning C.M."/>
            <person name="Barbazuk W.B."/>
            <person name="Blanchard M."/>
            <person name="Field C."/>
            <person name="Halling C."/>
            <person name="Hinkle G."/>
            <person name="Iartchuk O."/>
            <person name="Kim H.S."/>
            <person name="Mackenzie C."/>
            <person name="Madupu R."/>
            <person name="Miller N."/>
            <person name="Shvartsbeyn A."/>
            <person name="Sullivan S.A."/>
            <person name="Vaudin M."/>
            <person name="Wiegand R."/>
            <person name="Kaplan H.B."/>
        </authorList>
    </citation>
    <scope>NUCLEOTIDE SEQUENCE [LARGE SCALE GENOMIC DNA]</scope>
    <source>
        <strain>DK1622</strain>
    </source>
</reference>
<keyword id="KW-1185">Reference proteome</keyword>
<keyword id="KW-0687">Ribonucleoprotein</keyword>
<keyword id="KW-0689">Ribosomal protein</keyword>
<keyword id="KW-0694">RNA-binding</keyword>
<keyword id="KW-0699">rRNA-binding</keyword>
<protein>
    <recommendedName>
        <fullName evidence="1">Large ribosomal subunit protein bL21</fullName>
    </recommendedName>
    <alternativeName>
        <fullName evidence="2">50S ribosomal protein L21</fullName>
    </alternativeName>
</protein>
<name>RL21_MYXXD</name>
<sequence length="102" mass="11213">MYAVIRTGGKQYRVAEGDVVRIEKIAGDVGAEVTFTEILLVGGSESPKVGQPTVAGAKVVGKVLAQDKHRRVLHFRKEKEGWTRRRGHRQPYTEVKVTSIAG</sequence>
<organism>
    <name type="scientific">Myxococcus xanthus (strain DK1622)</name>
    <dbReference type="NCBI Taxonomy" id="246197"/>
    <lineage>
        <taxon>Bacteria</taxon>
        <taxon>Pseudomonadati</taxon>
        <taxon>Myxococcota</taxon>
        <taxon>Myxococcia</taxon>
        <taxon>Myxococcales</taxon>
        <taxon>Cystobacterineae</taxon>
        <taxon>Myxococcaceae</taxon>
        <taxon>Myxococcus</taxon>
    </lineage>
</organism>
<dbReference type="EMBL" id="CP000113">
    <property type="protein sequence ID" value="ABF86284.1"/>
    <property type="status" value="ALT_INIT"/>
    <property type="molecule type" value="Genomic_DNA"/>
</dbReference>
<dbReference type="RefSeq" id="WP_026113820.1">
    <property type="nucleotide sequence ID" value="NC_008095.1"/>
</dbReference>
<dbReference type="SMR" id="Q1DC97"/>
<dbReference type="STRING" id="246197.MXAN_1469"/>
<dbReference type="EnsemblBacteria" id="ABF86284">
    <property type="protein sequence ID" value="ABF86284"/>
    <property type="gene ID" value="MXAN_1469"/>
</dbReference>
<dbReference type="GeneID" id="41358915"/>
<dbReference type="KEGG" id="mxa:MXAN_1469"/>
<dbReference type="eggNOG" id="COG0261">
    <property type="taxonomic scope" value="Bacteria"/>
</dbReference>
<dbReference type="HOGENOM" id="CLU_061463_3_2_7"/>
<dbReference type="OrthoDB" id="9813334at2"/>
<dbReference type="Proteomes" id="UP000002402">
    <property type="component" value="Chromosome"/>
</dbReference>
<dbReference type="GO" id="GO:0005737">
    <property type="term" value="C:cytoplasm"/>
    <property type="evidence" value="ECO:0007669"/>
    <property type="project" value="UniProtKB-ARBA"/>
</dbReference>
<dbReference type="GO" id="GO:1990904">
    <property type="term" value="C:ribonucleoprotein complex"/>
    <property type="evidence" value="ECO:0007669"/>
    <property type="project" value="UniProtKB-KW"/>
</dbReference>
<dbReference type="GO" id="GO:0005840">
    <property type="term" value="C:ribosome"/>
    <property type="evidence" value="ECO:0007669"/>
    <property type="project" value="UniProtKB-KW"/>
</dbReference>
<dbReference type="GO" id="GO:0019843">
    <property type="term" value="F:rRNA binding"/>
    <property type="evidence" value="ECO:0007669"/>
    <property type="project" value="UniProtKB-UniRule"/>
</dbReference>
<dbReference type="GO" id="GO:0003735">
    <property type="term" value="F:structural constituent of ribosome"/>
    <property type="evidence" value="ECO:0007669"/>
    <property type="project" value="InterPro"/>
</dbReference>
<dbReference type="GO" id="GO:0006412">
    <property type="term" value="P:translation"/>
    <property type="evidence" value="ECO:0007669"/>
    <property type="project" value="UniProtKB-UniRule"/>
</dbReference>
<dbReference type="HAMAP" id="MF_01363">
    <property type="entry name" value="Ribosomal_bL21"/>
    <property type="match status" value="1"/>
</dbReference>
<dbReference type="InterPro" id="IPR028909">
    <property type="entry name" value="bL21-like"/>
</dbReference>
<dbReference type="InterPro" id="IPR036164">
    <property type="entry name" value="bL21-like_sf"/>
</dbReference>
<dbReference type="InterPro" id="IPR001787">
    <property type="entry name" value="Ribosomal_bL21"/>
</dbReference>
<dbReference type="NCBIfam" id="TIGR00061">
    <property type="entry name" value="L21"/>
    <property type="match status" value="1"/>
</dbReference>
<dbReference type="PANTHER" id="PTHR21349">
    <property type="entry name" value="50S RIBOSOMAL PROTEIN L21"/>
    <property type="match status" value="1"/>
</dbReference>
<dbReference type="PANTHER" id="PTHR21349:SF0">
    <property type="entry name" value="LARGE RIBOSOMAL SUBUNIT PROTEIN BL21M"/>
    <property type="match status" value="1"/>
</dbReference>
<dbReference type="Pfam" id="PF00829">
    <property type="entry name" value="Ribosomal_L21p"/>
    <property type="match status" value="1"/>
</dbReference>
<dbReference type="SUPFAM" id="SSF141091">
    <property type="entry name" value="L21p-like"/>
    <property type="match status" value="1"/>
</dbReference>
<evidence type="ECO:0000255" key="1">
    <source>
        <dbReference type="HAMAP-Rule" id="MF_01363"/>
    </source>
</evidence>
<evidence type="ECO:0000305" key="2"/>
<feature type="chain" id="PRO_0000270696" description="Large ribosomal subunit protein bL21">
    <location>
        <begin position="1"/>
        <end position="102"/>
    </location>
</feature>
<proteinExistence type="inferred from homology"/>